<protein>
    <recommendedName>
        <fullName evidence="1">Photosystem II CP47 reaction center protein</fullName>
    </recommendedName>
    <alternativeName>
        <fullName evidence="1">PSII 47 kDa protein</fullName>
    </alternativeName>
    <alternativeName>
        <fullName evidence="1">Protein CP-47</fullName>
    </alternativeName>
</protein>
<geneLocation type="chloroplast"/>
<proteinExistence type="inferred from homology"/>
<dbReference type="EMBL" id="AP009367">
    <property type="protein sequence ID" value="BAF49880.1"/>
    <property type="molecule type" value="Genomic_DNA"/>
</dbReference>
<dbReference type="RefSeq" id="YP_001123056.1">
    <property type="nucleotide sequence ID" value="NC_009266.1"/>
</dbReference>
<dbReference type="SMR" id="A4QJM5"/>
<dbReference type="GeneID" id="4962326"/>
<dbReference type="GO" id="GO:0009535">
    <property type="term" value="C:chloroplast thylakoid membrane"/>
    <property type="evidence" value="ECO:0007669"/>
    <property type="project" value="UniProtKB-SubCell"/>
</dbReference>
<dbReference type="GO" id="GO:0009523">
    <property type="term" value="C:photosystem II"/>
    <property type="evidence" value="ECO:0007669"/>
    <property type="project" value="UniProtKB-KW"/>
</dbReference>
<dbReference type="GO" id="GO:0016168">
    <property type="term" value="F:chlorophyll binding"/>
    <property type="evidence" value="ECO:0007669"/>
    <property type="project" value="UniProtKB-UniRule"/>
</dbReference>
<dbReference type="GO" id="GO:0045156">
    <property type="term" value="F:electron transporter, transferring electrons within the cyclic electron transport pathway of photosynthesis activity"/>
    <property type="evidence" value="ECO:0007669"/>
    <property type="project" value="InterPro"/>
</dbReference>
<dbReference type="GO" id="GO:0009772">
    <property type="term" value="P:photosynthetic electron transport in photosystem II"/>
    <property type="evidence" value="ECO:0007669"/>
    <property type="project" value="InterPro"/>
</dbReference>
<dbReference type="FunFam" id="3.10.680.10:FF:000001">
    <property type="entry name" value="Photosystem II CP47 reaction center protein"/>
    <property type="match status" value="1"/>
</dbReference>
<dbReference type="Gene3D" id="3.10.680.10">
    <property type="entry name" value="Photosystem II CP47 reaction center protein"/>
    <property type="match status" value="1"/>
</dbReference>
<dbReference type="HAMAP" id="MF_01495">
    <property type="entry name" value="PSII_PsbB_CP47"/>
    <property type="match status" value="1"/>
</dbReference>
<dbReference type="InterPro" id="IPR000932">
    <property type="entry name" value="PS_antenna-like"/>
</dbReference>
<dbReference type="InterPro" id="IPR036001">
    <property type="entry name" value="PS_II_antenna-like_sf"/>
</dbReference>
<dbReference type="InterPro" id="IPR017486">
    <property type="entry name" value="PSII_PsbB"/>
</dbReference>
<dbReference type="NCBIfam" id="TIGR03039">
    <property type="entry name" value="PS_II_CP47"/>
    <property type="match status" value="1"/>
</dbReference>
<dbReference type="PANTHER" id="PTHR33180">
    <property type="entry name" value="PHOTOSYSTEM II CP43 REACTION CENTER PROTEIN"/>
    <property type="match status" value="1"/>
</dbReference>
<dbReference type="PANTHER" id="PTHR33180:SF38">
    <property type="entry name" value="PHOTOSYSTEM II CP47 REACTION CENTER PROTEIN"/>
    <property type="match status" value="1"/>
</dbReference>
<dbReference type="Pfam" id="PF00421">
    <property type="entry name" value="PSII"/>
    <property type="match status" value="1"/>
</dbReference>
<dbReference type="SUPFAM" id="SSF161077">
    <property type="entry name" value="Photosystem II antenna protein-like"/>
    <property type="match status" value="1"/>
</dbReference>
<gene>
    <name evidence="1" type="primary">psbB</name>
</gene>
<comment type="function">
    <text evidence="1">One of the components of the core complex of photosystem II (PSII). It binds chlorophyll and helps catalyze the primary light-induced photochemical processes of PSII. PSII is a light-driven water:plastoquinone oxidoreductase, using light energy to abstract electrons from H(2)O, generating O(2) and a proton gradient subsequently used for ATP formation.</text>
</comment>
<comment type="cofactor">
    <text evidence="1">Binds multiple chlorophylls. PSII binds additional chlorophylls, carotenoids and specific lipids.</text>
</comment>
<comment type="subunit">
    <text evidence="1">PSII is composed of 1 copy each of membrane proteins PsbA, PsbB, PsbC, PsbD, PsbE, PsbF, PsbH, PsbI, PsbJ, PsbK, PsbL, PsbM, PsbT, PsbX, PsbY, PsbZ, Psb30/Ycf12, at least 3 peripheral proteins of the oxygen-evolving complex and a large number of cofactors. It forms dimeric complexes.</text>
</comment>
<comment type="subcellular location">
    <subcellularLocation>
        <location evidence="1">Plastid</location>
        <location evidence="1">Chloroplast thylakoid membrane</location>
        <topology evidence="1">Multi-pass membrane protein</topology>
    </subcellularLocation>
</comment>
<comment type="similarity">
    <text evidence="1">Belongs to the PsbB/PsbC family. PsbB subfamily.</text>
</comment>
<evidence type="ECO:0000255" key="1">
    <source>
        <dbReference type="HAMAP-Rule" id="MF_01495"/>
    </source>
</evidence>
<organism>
    <name type="scientific">Aethionema grandiflorum</name>
    <name type="common">Persian stone-cress</name>
    <dbReference type="NCBI Taxonomy" id="72657"/>
    <lineage>
        <taxon>Eukaryota</taxon>
        <taxon>Viridiplantae</taxon>
        <taxon>Streptophyta</taxon>
        <taxon>Embryophyta</taxon>
        <taxon>Tracheophyta</taxon>
        <taxon>Spermatophyta</taxon>
        <taxon>Magnoliopsida</taxon>
        <taxon>eudicotyledons</taxon>
        <taxon>Gunneridae</taxon>
        <taxon>Pentapetalae</taxon>
        <taxon>rosids</taxon>
        <taxon>malvids</taxon>
        <taxon>Brassicales</taxon>
        <taxon>Brassicaceae</taxon>
        <taxon>Aethionemeae</taxon>
        <taxon>Aethionema</taxon>
    </lineage>
</organism>
<name>PSBB_AETGR</name>
<keyword id="KW-0148">Chlorophyll</keyword>
<keyword id="KW-0150">Chloroplast</keyword>
<keyword id="KW-0157">Chromophore</keyword>
<keyword id="KW-0472">Membrane</keyword>
<keyword id="KW-0602">Photosynthesis</keyword>
<keyword id="KW-0604">Photosystem II</keyword>
<keyword id="KW-0934">Plastid</keyword>
<keyword id="KW-0793">Thylakoid</keyword>
<keyword id="KW-0812">Transmembrane</keyword>
<keyword id="KW-1133">Transmembrane helix</keyword>
<sequence>MGLPWYRVHTVVLNDPGRLLSVHIMHTALVAGWAGSMALYELAVFDPSDPVLDPMWRQGMFVIPFMTRLGITNSWGGWNITGGTITNPGLWSYEGVAGAHIVFSGLCFLAAIWHWVYWDLEIFCDERTGKPSLDLPKIFGIHLFLSGVACFGFGAFHVTGLYGPGIWVSDPYGLTGKVQPVNPAWGVEGFDPFVPGGIASHHIAAGTLGILAGLFHLSVRPPQRLYKGLRMGNIETVLSSSIAAVFFAAFVVAGTMWYGSATTPIELFGPTRYEWDQGYFQQEIYRRVSAGLAENQSLSEVWSKIPEKLAFYDYIGNNPAKGGLFRAGSMDNGDGIAVGWLGHPVFRNKEGRELFVRRMPTFFETFPVVLVDGDGIVRAYVPFRRAESKYSVEQVGVTVELYGGELNGVSYSDPATVKKYARRAQLGEIFELDRATLKSDGVFRSSPRGWFTFGHASFALLFFFGHIWHGARTLFRDVFAGIDPDLDAQVEFGAFQKLGDPTTKRQAA</sequence>
<feature type="chain" id="PRO_0000359792" description="Photosystem II CP47 reaction center protein">
    <location>
        <begin position="1"/>
        <end position="508"/>
    </location>
</feature>
<feature type="transmembrane region" description="Helical" evidence="1">
    <location>
        <begin position="21"/>
        <end position="36"/>
    </location>
</feature>
<feature type="transmembrane region" description="Helical" evidence="1">
    <location>
        <begin position="101"/>
        <end position="115"/>
    </location>
</feature>
<feature type="transmembrane region" description="Helical" evidence="1">
    <location>
        <begin position="140"/>
        <end position="156"/>
    </location>
</feature>
<feature type="transmembrane region" description="Helical" evidence="1">
    <location>
        <begin position="203"/>
        <end position="218"/>
    </location>
</feature>
<feature type="transmembrane region" description="Helical" evidence="1">
    <location>
        <begin position="237"/>
        <end position="252"/>
    </location>
</feature>
<feature type="transmembrane region" description="Helical" evidence="1">
    <location>
        <begin position="457"/>
        <end position="472"/>
    </location>
</feature>
<reference key="1">
    <citation type="submission" date="2007-03" db="EMBL/GenBank/DDBJ databases">
        <title>Sequencing analysis of Aethionema grandiflorum chloroplast DNA.</title>
        <authorList>
            <person name="Hosouchi T."/>
            <person name="Tsuruoka H."/>
            <person name="Kotani H."/>
        </authorList>
    </citation>
    <scope>NUCLEOTIDE SEQUENCE [LARGE SCALE GENOMIC DNA]</scope>
</reference>
<accession>A4QJM5</accession>